<gene>
    <name evidence="1" type="primary">acpP</name>
    <name type="ordered locus">Plut_0130</name>
</gene>
<protein>
    <recommendedName>
        <fullName evidence="1">Acyl carrier protein</fullName>
        <shortName evidence="1">ACP</shortName>
    </recommendedName>
</protein>
<comment type="function">
    <text evidence="1">Carrier of the growing fatty acid chain in fatty acid biosynthesis.</text>
</comment>
<comment type="pathway">
    <text evidence="1">Lipid metabolism; fatty acid biosynthesis.</text>
</comment>
<comment type="subcellular location">
    <subcellularLocation>
        <location evidence="1">Cytoplasm</location>
    </subcellularLocation>
</comment>
<comment type="PTM">
    <text evidence="1">4'-phosphopantetheine is transferred from CoA to a specific serine of apo-ACP by AcpS. This modification is essential for activity because fatty acids are bound in thioester linkage to the sulfhydryl of the prosthetic group.</text>
</comment>
<comment type="similarity">
    <text evidence="1">Belongs to the acyl carrier protein (ACP) family.</text>
</comment>
<name>ACP_CHLL3</name>
<evidence type="ECO:0000255" key="1">
    <source>
        <dbReference type="HAMAP-Rule" id="MF_01217"/>
    </source>
</evidence>
<evidence type="ECO:0000255" key="2">
    <source>
        <dbReference type="PROSITE-ProRule" id="PRU00258"/>
    </source>
</evidence>
<reference key="1">
    <citation type="submission" date="2005-08" db="EMBL/GenBank/DDBJ databases">
        <title>Complete sequence of Pelodictyon luteolum DSM 273.</title>
        <authorList>
            <consortium name="US DOE Joint Genome Institute"/>
            <person name="Copeland A."/>
            <person name="Lucas S."/>
            <person name="Lapidus A."/>
            <person name="Barry K."/>
            <person name="Detter J.C."/>
            <person name="Glavina T."/>
            <person name="Hammon N."/>
            <person name="Israni S."/>
            <person name="Pitluck S."/>
            <person name="Bryant D."/>
            <person name="Schmutz J."/>
            <person name="Larimer F."/>
            <person name="Land M."/>
            <person name="Kyrpides N."/>
            <person name="Ivanova N."/>
            <person name="Richardson P."/>
        </authorList>
    </citation>
    <scope>NUCLEOTIDE SEQUENCE [LARGE SCALE GENOMIC DNA]</scope>
    <source>
        <strain>DSM 273 / BCRC 81028 / 2530</strain>
    </source>
</reference>
<dbReference type="EMBL" id="CP000096">
    <property type="protein sequence ID" value="ABB23020.1"/>
    <property type="molecule type" value="Genomic_DNA"/>
</dbReference>
<dbReference type="RefSeq" id="WP_011356896.1">
    <property type="nucleotide sequence ID" value="NC_007512.1"/>
</dbReference>
<dbReference type="SMR" id="Q3B6L1"/>
<dbReference type="STRING" id="319225.Plut_0130"/>
<dbReference type="KEGG" id="plt:Plut_0130"/>
<dbReference type="eggNOG" id="COG0236">
    <property type="taxonomic scope" value="Bacteria"/>
</dbReference>
<dbReference type="HOGENOM" id="CLU_108696_5_1_10"/>
<dbReference type="OrthoDB" id="9804551at2"/>
<dbReference type="UniPathway" id="UPA00094"/>
<dbReference type="Proteomes" id="UP000002709">
    <property type="component" value="Chromosome"/>
</dbReference>
<dbReference type="GO" id="GO:0005829">
    <property type="term" value="C:cytosol"/>
    <property type="evidence" value="ECO:0007669"/>
    <property type="project" value="TreeGrafter"/>
</dbReference>
<dbReference type="GO" id="GO:0016020">
    <property type="term" value="C:membrane"/>
    <property type="evidence" value="ECO:0007669"/>
    <property type="project" value="GOC"/>
</dbReference>
<dbReference type="GO" id="GO:0000035">
    <property type="term" value="F:acyl binding"/>
    <property type="evidence" value="ECO:0007669"/>
    <property type="project" value="TreeGrafter"/>
</dbReference>
<dbReference type="GO" id="GO:0000036">
    <property type="term" value="F:acyl carrier activity"/>
    <property type="evidence" value="ECO:0007669"/>
    <property type="project" value="UniProtKB-UniRule"/>
</dbReference>
<dbReference type="GO" id="GO:0009245">
    <property type="term" value="P:lipid A biosynthetic process"/>
    <property type="evidence" value="ECO:0007669"/>
    <property type="project" value="TreeGrafter"/>
</dbReference>
<dbReference type="FunFam" id="1.10.1200.10:FF:000001">
    <property type="entry name" value="Acyl carrier protein"/>
    <property type="match status" value="1"/>
</dbReference>
<dbReference type="Gene3D" id="1.10.1200.10">
    <property type="entry name" value="ACP-like"/>
    <property type="match status" value="1"/>
</dbReference>
<dbReference type="HAMAP" id="MF_01217">
    <property type="entry name" value="Acyl_carrier"/>
    <property type="match status" value="1"/>
</dbReference>
<dbReference type="InterPro" id="IPR003231">
    <property type="entry name" value="ACP"/>
</dbReference>
<dbReference type="InterPro" id="IPR036736">
    <property type="entry name" value="ACP-like_sf"/>
</dbReference>
<dbReference type="InterPro" id="IPR009081">
    <property type="entry name" value="PP-bd_ACP"/>
</dbReference>
<dbReference type="InterPro" id="IPR006162">
    <property type="entry name" value="Ppantetheine_attach_site"/>
</dbReference>
<dbReference type="NCBIfam" id="TIGR00517">
    <property type="entry name" value="acyl_carrier"/>
    <property type="match status" value="1"/>
</dbReference>
<dbReference type="NCBIfam" id="NF002148">
    <property type="entry name" value="PRK00982.1-2"/>
    <property type="match status" value="1"/>
</dbReference>
<dbReference type="NCBIfam" id="NF002149">
    <property type="entry name" value="PRK00982.1-3"/>
    <property type="match status" value="1"/>
</dbReference>
<dbReference type="NCBIfam" id="NF002150">
    <property type="entry name" value="PRK00982.1-4"/>
    <property type="match status" value="1"/>
</dbReference>
<dbReference type="NCBIfam" id="NF002151">
    <property type="entry name" value="PRK00982.1-5"/>
    <property type="match status" value="1"/>
</dbReference>
<dbReference type="PANTHER" id="PTHR20863">
    <property type="entry name" value="ACYL CARRIER PROTEIN"/>
    <property type="match status" value="1"/>
</dbReference>
<dbReference type="PANTHER" id="PTHR20863:SF76">
    <property type="entry name" value="CARRIER DOMAIN-CONTAINING PROTEIN"/>
    <property type="match status" value="1"/>
</dbReference>
<dbReference type="Pfam" id="PF00550">
    <property type="entry name" value="PP-binding"/>
    <property type="match status" value="1"/>
</dbReference>
<dbReference type="SUPFAM" id="SSF47336">
    <property type="entry name" value="ACP-like"/>
    <property type="match status" value="1"/>
</dbReference>
<dbReference type="PROSITE" id="PS50075">
    <property type="entry name" value="CARRIER"/>
    <property type="match status" value="1"/>
</dbReference>
<dbReference type="PROSITE" id="PS00012">
    <property type="entry name" value="PHOSPHOPANTETHEINE"/>
    <property type="match status" value="1"/>
</dbReference>
<accession>Q3B6L1</accession>
<sequence length="78" mass="8849">MTEAEIRDKVYDIIVSKMGVNKDQIKPESKFSDDLGADSLDTVELIMELENEFDVQIPDEDAEKIGTVQQAIDYIVKK</sequence>
<feature type="chain" id="PRO_1000066648" description="Acyl carrier protein">
    <location>
        <begin position="1"/>
        <end position="78"/>
    </location>
</feature>
<feature type="domain" description="Carrier" evidence="2">
    <location>
        <begin position="4"/>
        <end position="78"/>
    </location>
</feature>
<feature type="modified residue" description="O-(pantetheine 4'-phosphoryl)serine" evidence="2">
    <location>
        <position position="39"/>
    </location>
</feature>
<proteinExistence type="inferred from homology"/>
<organism>
    <name type="scientific">Chlorobium luteolum (strain DSM 273 / BCRC 81028 / 2530)</name>
    <name type="common">Pelodictyon luteolum</name>
    <dbReference type="NCBI Taxonomy" id="319225"/>
    <lineage>
        <taxon>Bacteria</taxon>
        <taxon>Pseudomonadati</taxon>
        <taxon>Chlorobiota</taxon>
        <taxon>Chlorobiia</taxon>
        <taxon>Chlorobiales</taxon>
        <taxon>Chlorobiaceae</taxon>
        <taxon>Chlorobium/Pelodictyon group</taxon>
        <taxon>Pelodictyon</taxon>
    </lineage>
</organism>
<keyword id="KW-0963">Cytoplasm</keyword>
<keyword id="KW-0275">Fatty acid biosynthesis</keyword>
<keyword id="KW-0276">Fatty acid metabolism</keyword>
<keyword id="KW-0444">Lipid biosynthesis</keyword>
<keyword id="KW-0443">Lipid metabolism</keyword>
<keyword id="KW-0596">Phosphopantetheine</keyword>
<keyword id="KW-0597">Phosphoprotein</keyword>
<keyword id="KW-1185">Reference proteome</keyword>